<keyword id="KW-0002">3D-structure</keyword>
<keyword id="KW-0084">Basement membrane</keyword>
<keyword id="KW-0130">Cell adhesion</keyword>
<keyword id="KW-0176">Collagen</keyword>
<keyword id="KW-1015">Disulfide bond</keyword>
<keyword id="KW-0272">Extracellular matrix</keyword>
<keyword id="KW-0325">Glycoprotein</keyword>
<keyword id="KW-0379">Hydroxylation</keyword>
<keyword id="KW-0646">Protease inhibitor</keyword>
<keyword id="KW-1185">Reference proteome</keyword>
<keyword id="KW-0677">Repeat</keyword>
<keyword id="KW-0964">Secreted</keyword>
<keyword id="KW-0722">Serine protease inhibitor</keyword>
<keyword id="KW-0732">Signal</keyword>
<feature type="signal peptide" evidence="3">
    <location>
        <begin position="1"/>
        <end position="24"/>
    </location>
</feature>
<feature type="chain" id="PRO_0000282951" description="Collagen alpha-1(VII) chain" evidence="3">
    <location>
        <begin position="25"/>
        <end position="2944"/>
    </location>
</feature>
<feature type="domain" description="VWFA 1" evidence="5">
    <location>
        <begin position="39"/>
        <end position="212"/>
    </location>
</feature>
<feature type="domain" description="Fibronectin type-III 1" evidence="6">
    <location>
        <begin position="235"/>
        <end position="330"/>
    </location>
</feature>
<feature type="domain" description="Fibronectin type-III 2" evidence="6">
    <location>
        <begin position="331"/>
        <end position="417"/>
    </location>
</feature>
<feature type="domain" description="Fibronectin type-III 3" evidence="6">
    <location>
        <begin position="418"/>
        <end position="508"/>
    </location>
</feature>
<feature type="domain" description="Fibronectin type-III 4" evidence="6">
    <location>
        <begin position="511"/>
        <end position="598"/>
    </location>
</feature>
<feature type="domain" description="Fibronectin type-III 5" evidence="6">
    <location>
        <begin position="601"/>
        <end position="688"/>
    </location>
</feature>
<feature type="domain" description="Fibronectin type-III 6" evidence="6">
    <location>
        <begin position="689"/>
        <end position="776"/>
    </location>
</feature>
<feature type="domain" description="Fibronectin type-III 7" evidence="6">
    <location>
        <begin position="779"/>
        <end position="867"/>
    </location>
</feature>
<feature type="domain" description="Fibronectin type-III 8" evidence="6">
    <location>
        <begin position="870"/>
        <end position="957"/>
    </location>
</feature>
<feature type="domain" description="Fibronectin type-III 9" evidence="6">
    <location>
        <begin position="959"/>
        <end position="1053"/>
    </location>
</feature>
<feature type="domain" description="VWFA 2" evidence="5">
    <location>
        <begin position="1055"/>
        <end position="1230"/>
    </location>
</feature>
<feature type="domain" description="BPTI/Kunitz inhibitor" evidence="4">
    <location>
        <begin position="2879"/>
        <end position="2931"/>
    </location>
</feature>
<feature type="region of interest" description="Nonhelical region (NC1)" evidence="3">
    <location>
        <begin position="18"/>
        <end position="1254"/>
    </location>
</feature>
<feature type="region of interest" description="Triple-helical region" evidence="3">
    <location>
        <begin position="1255"/>
        <end position="2775"/>
    </location>
</feature>
<feature type="region of interest" description="Interrupted collagenous region" evidence="3">
    <location>
        <begin position="1255"/>
        <end position="1475"/>
    </location>
</feature>
<feature type="region of interest" description="Disordered" evidence="7">
    <location>
        <begin position="1259"/>
        <end position="1934"/>
    </location>
</feature>
<feature type="region of interest" description="Disordered" evidence="7">
    <location>
        <begin position="1960"/>
        <end position="2773"/>
    </location>
</feature>
<feature type="region of interest" description="Nonhelical region (NC2)" evidence="3">
    <location>
        <begin position="2776"/>
        <end position="2944"/>
    </location>
</feature>
<feature type="short sequence motif" description="Cell attachment site" evidence="3">
    <location>
        <begin position="1171"/>
        <end position="1173"/>
    </location>
</feature>
<feature type="short sequence motif" description="Cell attachment site" evidence="3">
    <location>
        <begin position="2002"/>
        <end position="2004"/>
    </location>
</feature>
<feature type="short sequence motif" description="Cell attachment site" evidence="3">
    <location>
        <begin position="2063"/>
        <end position="2065"/>
    </location>
</feature>
<feature type="short sequence motif" description="Cell attachment site" evidence="3">
    <location>
        <begin position="2601"/>
        <end position="2603"/>
    </location>
</feature>
<feature type="short sequence motif" description="Cell attachment site" evidence="3">
    <location>
        <begin position="2631"/>
        <end position="2633"/>
    </location>
</feature>
<feature type="compositionally biased region" description="Low complexity" evidence="7">
    <location>
        <begin position="1338"/>
        <end position="1352"/>
    </location>
</feature>
<feature type="compositionally biased region" description="Gly residues" evidence="7">
    <location>
        <begin position="1353"/>
        <end position="1363"/>
    </location>
</feature>
<feature type="compositionally biased region" description="Basic and acidic residues" evidence="7">
    <location>
        <begin position="1397"/>
        <end position="1406"/>
    </location>
</feature>
<feature type="compositionally biased region" description="Basic and acidic residues" evidence="7">
    <location>
        <begin position="1439"/>
        <end position="1448"/>
    </location>
</feature>
<feature type="compositionally biased region" description="Low complexity" evidence="7">
    <location>
        <begin position="1507"/>
        <end position="1518"/>
    </location>
</feature>
<feature type="compositionally biased region" description="Basic and acidic residues" evidence="7">
    <location>
        <begin position="1527"/>
        <end position="1536"/>
    </location>
</feature>
<feature type="compositionally biased region" description="Basic and acidic residues" evidence="7">
    <location>
        <begin position="1627"/>
        <end position="1639"/>
    </location>
</feature>
<feature type="compositionally biased region" description="Basic and acidic residues" evidence="7">
    <location>
        <begin position="1666"/>
        <end position="1680"/>
    </location>
</feature>
<feature type="compositionally biased region" description="Pro residues" evidence="7">
    <location>
        <begin position="1813"/>
        <end position="1822"/>
    </location>
</feature>
<feature type="compositionally biased region" description="Basic and acidic residues" evidence="7">
    <location>
        <begin position="1846"/>
        <end position="1855"/>
    </location>
</feature>
<feature type="compositionally biased region" description="Basic and acidic residues" evidence="7">
    <location>
        <begin position="1862"/>
        <end position="1871"/>
    </location>
</feature>
<feature type="compositionally biased region" description="Basic and acidic residues" evidence="7">
    <location>
        <begin position="1968"/>
        <end position="1984"/>
    </location>
</feature>
<feature type="compositionally biased region" description="Gly residues" evidence="7">
    <location>
        <begin position="2040"/>
        <end position="2049"/>
    </location>
</feature>
<feature type="compositionally biased region" description="Basic and acidic residues" evidence="7">
    <location>
        <begin position="2050"/>
        <end position="2068"/>
    </location>
</feature>
<feature type="compositionally biased region" description="Pro residues" evidence="7">
    <location>
        <begin position="2074"/>
        <end position="2083"/>
    </location>
</feature>
<feature type="compositionally biased region" description="Basic and acidic residues" evidence="7">
    <location>
        <begin position="2130"/>
        <end position="2140"/>
    </location>
</feature>
<feature type="compositionally biased region" description="Low complexity" evidence="7">
    <location>
        <begin position="2182"/>
        <end position="2197"/>
    </location>
</feature>
<feature type="compositionally biased region" description="Low complexity" evidence="7">
    <location>
        <begin position="2226"/>
        <end position="2241"/>
    </location>
</feature>
<feature type="compositionally biased region" description="Low complexity" evidence="7">
    <location>
        <begin position="2279"/>
        <end position="2299"/>
    </location>
</feature>
<feature type="compositionally biased region" description="Low complexity" evidence="7">
    <location>
        <begin position="2306"/>
        <end position="2317"/>
    </location>
</feature>
<feature type="compositionally biased region" description="Basic and acidic residues" evidence="7">
    <location>
        <begin position="2319"/>
        <end position="2335"/>
    </location>
</feature>
<feature type="compositionally biased region" description="Low complexity" evidence="7">
    <location>
        <begin position="2414"/>
        <end position="2427"/>
    </location>
</feature>
<feature type="compositionally biased region" description="Basic and acidic residues" evidence="7">
    <location>
        <begin position="2462"/>
        <end position="2477"/>
    </location>
</feature>
<feature type="compositionally biased region" description="Basic and acidic residues" evidence="7">
    <location>
        <begin position="2525"/>
        <end position="2544"/>
    </location>
</feature>
<feature type="compositionally biased region" description="Low complexity" evidence="7">
    <location>
        <begin position="2576"/>
        <end position="2594"/>
    </location>
</feature>
<feature type="compositionally biased region" description="Basic and acidic residues" evidence="7">
    <location>
        <begin position="2615"/>
        <end position="2636"/>
    </location>
</feature>
<feature type="compositionally biased region" description="Gly residues" evidence="7">
    <location>
        <begin position="2695"/>
        <end position="2704"/>
    </location>
</feature>
<feature type="site" description="Reactive bond" evidence="1">
    <location>
        <begin position="2889"/>
        <end position="2890"/>
    </location>
</feature>
<feature type="modified residue" description="4-hydroxyproline" evidence="1">
    <location>
        <position position="2158"/>
    </location>
</feature>
<feature type="modified residue" description="4-hydroxyproline" evidence="1">
    <location>
        <position position="2167"/>
    </location>
</feature>
<feature type="modified residue" description="4-hydroxyproline" evidence="1">
    <location>
        <position position="2176"/>
    </location>
</feature>
<feature type="modified residue" description="4-hydroxyproline" evidence="1">
    <location>
        <position position="2179"/>
    </location>
</feature>
<feature type="modified residue" description="5-hydroxylysine" evidence="1">
    <location>
        <position position="2616"/>
    </location>
</feature>
<feature type="modified residue" description="5-hydroxylysine" evidence="1">
    <location>
        <position position="2622"/>
    </location>
</feature>
<feature type="modified residue" description="4-hydroxyproline" evidence="1">
    <location>
        <position position="2655"/>
    </location>
</feature>
<feature type="modified residue" description="4-hydroxyproline" evidence="1">
    <location>
        <position position="2658"/>
    </location>
</feature>
<feature type="modified residue" description="4-hydroxyproline" evidence="1">
    <location>
        <position position="2664"/>
    </location>
</feature>
<feature type="glycosylation site" description="N-linked (GlcNAc...) asparagine" evidence="3">
    <location>
        <position position="338"/>
    </location>
</feature>
<feature type="glycosylation site" description="N-linked (GlcNAc...) asparagine" evidence="3">
    <location>
        <position position="787"/>
    </location>
</feature>
<feature type="glycosylation site" description="N-linked (GlcNAc...) asparagine" evidence="3">
    <location>
        <position position="1110"/>
    </location>
</feature>
<feature type="disulfide bond" description="Interchain" evidence="4">
    <location>
        <position position="2625"/>
    </location>
</feature>
<feature type="disulfide bond" description="Interchain" evidence="4">
    <location>
        <position position="2793"/>
    </location>
</feature>
<feature type="disulfide bond" description="Interchain" evidence="4">
    <location>
        <position position="2795"/>
    </location>
</feature>
<feature type="disulfide bond" evidence="4">
    <location>
        <begin position="2879"/>
        <end position="2931"/>
    </location>
</feature>
<feature type="disulfide bond" evidence="4">
    <location>
        <begin position="2888"/>
        <end position="2914"/>
    </location>
</feature>
<feature type="disulfide bond" evidence="4">
    <location>
        <begin position="2906"/>
        <end position="2927"/>
    </location>
</feature>
<feature type="sequence conflict" description="In Ref. 1; AAB66593." evidence="10" ref="1">
    <original>S</original>
    <variation>G</variation>
    <location>
        <position position="659"/>
    </location>
</feature>
<feature type="sequence conflict" description="In Ref. 1; AAB66593 and 3; AAB27492." evidence="10" ref="1 3">
    <original>R</original>
    <variation>A</variation>
    <location>
        <position position="1927"/>
    </location>
</feature>
<feature type="strand" evidence="14">
    <location>
        <begin position="1054"/>
        <end position="1061"/>
    </location>
</feature>
<feature type="helix" evidence="14">
    <location>
        <begin position="1067"/>
        <end position="1069"/>
    </location>
</feature>
<feature type="helix" evidence="14">
    <location>
        <begin position="1070"/>
        <end position="1082"/>
    </location>
</feature>
<feature type="strand" evidence="14">
    <location>
        <begin position="1086"/>
        <end position="1088"/>
    </location>
</feature>
<feature type="strand" evidence="14">
    <location>
        <begin position="1091"/>
        <end position="1107"/>
    </location>
</feature>
<feature type="helix" evidence="14">
    <location>
        <begin position="1115"/>
        <end position="1123"/>
    </location>
</feature>
<feature type="helix" evidence="14">
    <location>
        <begin position="1135"/>
        <end position="1146"/>
    </location>
</feature>
<feature type="strand" evidence="14">
    <location>
        <begin position="1160"/>
        <end position="1166"/>
    </location>
</feature>
<feature type="helix" evidence="14">
    <location>
        <begin position="1175"/>
        <end position="1183"/>
    </location>
</feature>
<feature type="strand" evidence="14">
    <location>
        <begin position="1187"/>
        <end position="1192"/>
    </location>
</feature>
<feature type="turn" evidence="14">
    <location>
        <begin position="1198"/>
        <end position="1202"/>
    </location>
</feature>
<feature type="strand" evidence="14">
    <location>
        <begin position="1212"/>
        <end position="1215"/>
    </location>
</feature>
<feature type="strand" evidence="14">
    <location>
        <begin position="1217"/>
        <end position="1220"/>
    </location>
</feature>
<feature type="helix" evidence="14">
    <location>
        <begin position="1221"/>
        <end position="1237"/>
    </location>
</feature>
<organism>
    <name type="scientific">Mus musculus</name>
    <name type="common">Mouse</name>
    <dbReference type="NCBI Taxonomy" id="10090"/>
    <lineage>
        <taxon>Eukaryota</taxon>
        <taxon>Metazoa</taxon>
        <taxon>Chordata</taxon>
        <taxon>Craniata</taxon>
        <taxon>Vertebrata</taxon>
        <taxon>Euteleostomi</taxon>
        <taxon>Mammalia</taxon>
        <taxon>Eutheria</taxon>
        <taxon>Euarchontoglires</taxon>
        <taxon>Glires</taxon>
        <taxon>Rodentia</taxon>
        <taxon>Myomorpha</taxon>
        <taxon>Muroidea</taxon>
        <taxon>Muridae</taxon>
        <taxon>Murinae</taxon>
        <taxon>Mus</taxon>
        <taxon>Mus</taxon>
    </lineage>
</organism>
<gene>
    <name evidence="13" type="primary">Col7a1</name>
</gene>
<evidence type="ECO:0000250" key="1"/>
<evidence type="ECO:0000250" key="2">
    <source>
        <dbReference type="UniProtKB" id="Q02388"/>
    </source>
</evidence>
<evidence type="ECO:0000255" key="3"/>
<evidence type="ECO:0000255" key="4">
    <source>
        <dbReference type="PROSITE-ProRule" id="PRU00031"/>
    </source>
</evidence>
<evidence type="ECO:0000255" key="5">
    <source>
        <dbReference type="PROSITE-ProRule" id="PRU00219"/>
    </source>
</evidence>
<evidence type="ECO:0000255" key="6">
    <source>
        <dbReference type="PROSITE-ProRule" id="PRU00316"/>
    </source>
</evidence>
<evidence type="ECO:0000256" key="7">
    <source>
        <dbReference type="SAM" id="MobiDB-lite"/>
    </source>
</evidence>
<evidence type="ECO:0000269" key="8">
    <source>
    </source>
</evidence>
<evidence type="ECO:0000269" key="9">
    <source>
    </source>
</evidence>
<evidence type="ECO:0000305" key="10"/>
<evidence type="ECO:0000312" key="11">
    <source>
        <dbReference type="EMBL" id="AAB27492.1"/>
    </source>
</evidence>
<evidence type="ECO:0000312" key="12">
    <source>
        <dbReference type="EMBL" id="AAB66593.1"/>
    </source>
</evidence>
<evidence type="ECO:0000312" key="13">
    <source>
        <dbReference type="MGI" id="MGI:88462"/>
    </source>
</evidence>
<evidence type="ECO:0007829" key="14">
    <source>
        <dbReference type="PDB" id="6S4C"/>
    </source>
</evidence>
<comment type="function">
    <text evidence="2 8">Stratified squamous epithelial basement membrane protein that forms anchoring fibrils which may contribute to epithelial basement membrane organization and adherence by interacting with extracellular matrix (ECM) proteins such as type IV collagen.</text>
</comment>
<comment type="subunit">
    <text evidence="1">Homotrimer. Interacts with MIA3/TANGO1; facilitating its loading into transport carriers and subsequent secretion (By similarity).</text>
</comment>
<comment type="interaction">
    <interactant intactId="EBI-8313134">
        <id>Q63870</id>
    </interactant>
    <interactant intactId="EBI-8313134">
        <id>Q63870</id>
        <label>Col7a1</label>
    </interactant>
    <organismsDiffer>false</organismsDiffer>
    <experiments>2</experiments>
</comment>
<comment type="subcellular location">
    <subcellularLocation>
        <location evidence="1">Secreted</location>
        <location evidence="1">Extracellular space</location>
        <location evidence="1">Extracellular matrix</location>
        <location evidence="1">Basement membrane</location>
    </subcellularLocation>
</comment>
<comment type="induction">
    <text evidence="9">Transcription of COL7A1 is stimulated by TGFB1 in keratinocytes and this is possibly dependent on a putative interaction between SMADS and AP1.</text>
</comment>
<comment type="PTM">
    <text evidence="10">Prolines at the third position of the tripeptide repeating unit (G-X-Y) are hydroxylated in some or all of the chains.</text>
</comment>
<comment type="disruption phenotype">
    <text evidence="8">Mice do not express type VII collagen in their skin; they are born with extensive cutaneous blistering and die during the first two weeks of life, possibly because of complications arising from blistering; this mouse mutant resembles the autosomal recessive inherited form of the dystrophic epidermolysis bullosa (DEB) in humans. Heterozygotes by comparison display a normal phenotype.</text>
</comment>
<dbReference type="EMBL" id="U32107">
    <property type="protein sequence ID" value="AAB66593.1"/>
    <property type="molecule type" value="mRNA"/>
</dbReference>
<dbReference type="EMBL" id="AC174646">
    <property type="status" value="NOT_ANNOTATED_CDS"/>
    <property type="molecule type" value="Genomic_DNA"/>
</dbReference>
<dbReference type="EMBL" id="S63654">
    <property type="protein sequence ID" value="AAB27492.1"/>
    <property type="molecule type" value="mRNA"/>
</dbReference>
<dbReference type="CCDS" id="CCDS40770.1"/>
<dbReference type="PIR" id="A45748">
    <property type="entry name" value="A45748"/>
</dbReference>
<dbReference type="RefSeq" id="NP_031764.2">
    <property type="nucleotide sequence ID" value="NM_007738.4"/>
</dbReference>
<dbReference type="RefSeq" id="XP_006511998.1">
    <property type="nucleotide sequence ID" value="XM_006511935.3"/>
</dbReference>
<dbReference type="PDB" id="6S4C">
    <property type="method" value="X-ray"/>
    <property type="resolution" value="2.00 A"/>
    <property type="chains" value="A=1048-1238"/>
</dbReference>
<dbReference type="PDBsum" id="6S4C"/>
<dbReference type="SMR" id="Q63870"/>
<dbReference type="BioGRID" id="198826">
    <property type="interactions" value="2"/>
</dbReference>
<dbReference type="ComplexPortal" id="CPX-2966">
    <property type="entry name" value="Collagen type VII trimer"/>
</dbReference>
<dbReference type="FunCoup" id="Q63870">
    <property type="interactions" value="192"/>
</dbReference>
<dbReference type="MINT" id="Q63870"/>
<dbReference type="STRING" id="10090.ENSMUSP00000107701"/>
<dbReference type="MEROPS" id="I02.967"/>
<dbReference type="GlyCosmos" id="Q63870">
    <property type="glycosylation" value="3 sites, No reported glycans"/>
</dbReference>
<dbReference type="GlyGen" id="Q63870">
    <property type="glycosylation" value="8 sites"/>
</dbReference>
<dbReference type="iPTMnet" id="Q63870"/>
<dbReference type="PhosphoSitePlus" id="Q63870"/>
<dbReference type="jPOST" id="Q63870"/>
<dbReference type="PaxDb" id="10090-ENSMUSP00000107701"/>
<dbReference type="PeptideAtlas" id="Q63870"/>
<dbReference type="ProteomicsDB" id="283671"/>
<dbReference type="DNASU" id="12836"/>
<dbReference type="Ensembl" id="ENSMUST00000026740.6">
    <property type="protein sequence ID" value="ENSMUSP00000026740.6"/>
    <property type="gene ID" value="ENSMUSG00000025650.14"/>
</dbReference>
<dbReference type="Ensembl" id="ENSMUST00000112070.8">
    <property type="protein sequence ID" value="ENSMUSP00000107701.2"/>
    <property type="gene ID" value="ENSMUSG00000025650.14"/>
</dbReference>
<dbReference type="GeneID" id="12836"/>
<dbReference type="KEGG" id="mmu:12836"/>
<dbReference type="UCSC" id="uc009rrh.1">
    <property type="organism name" value="mouse"/>
</dbReference>
<dbReference type="AGR" id="MGI:88462"/>
<dbReference type="CTD" id="1294"/>
<dbReference type="MGI" id="MGI:88462">
    <property type="gene designation" value="Col7a1"/>
</dbReference>
<dbReference type="VEuPathDB" id="HostDB:ENSMUSG00000025650"/>
<dbReference type="eggNOG" id="KOG3544">
    <property type="taxonomic scope" value="Eukaryota"/>
</dbReference>
<dbReference type="GeneTree" id="ENSGT00940000163668"/>
<dbReference type="HOGENOM" id="CLU_000510_0_0_1"/>
<dbReference type="InParanoid" id="Q63870"/>
<dbReference type="OMA" id="QTFFAVD"/>
<dbReference type="OrthoDB" id="9940467at2759"/>
<dbReference type="PhylomeDB" id="Q63870"/>
<dbReference type="TreeFam" id="TF351645"/>
<dbReference type="Reactome" id="R-MMU-1442490">
    <property type="pathway name" value="Collagen degradation"/>
</dbReference>
<dbReference type="Reactome" id="R-MMU-1474244">
    <property type="pathway name" value="Extracellular matrix organization"/>
</dbReference>
<dbReference type="Reactome" id="R-MMU-1650814">
    <property type="pathway name" value="Collagen biosynthesis and modifying enzymes"/>
</dbReference>
<dbReference type="Reactome" id="R-MMU-204005">
    <property type="pathway name" value="COPII-mediated vesicle transport"/>
</dbReference>
<dbReference type="Reactome" id="R-MMU-216083">
    <property type="pathway name" value="Integrin cell surface interactions"/>
</dbReference>
<dbReference type="Reactome" id="R-MMU-2214320">
    <property type="pathway name" value="Anchoring fibril formation"/>
</dbReference>
<dbReference type="Reactome" id="R-MMU-5694530">
    <property type="pathway name" value="Cargo concentration in the ER"/>
</dbReference>
<dbReference type="Reactome" id="R-MMU-8948216">
    <property type="pathway name" value="Collagen chain trimerization"/>
</dbReference>
<dbReference type="BioGRID-ORCS" id="12836">
    <property type="hits" value="3 hits in 79 CRISPR screens"/>
</dbReference>
<dbReference type="ChiTaRS" id="Col7a1">
    <property type="organism name" value="mouse"/>
</dbReference>
<dbReference type="PRO" id="PR:Q63870"/>
<dbReference type="Proteomes" id="UP000000589">
    <property type="component" value="Chromosome 9"/>
</dbReference>
<dbReference type="RNAct" id="Q63870">
    <property type="molecule type" value="protein"/>
</dbReference>
<dbReference type="Bgee" id="ENSMUSG00000025650">
    <property type="expression patterns" value="Expressed in lip and 184 other cell types or tissues"/>
</dbReference>
<dbReference type="GO" id="GO:0005604">
    <property type="term" value="C:basement membrane"/>
    <property type="evidence" value="ECO:0000314"/>
    <property type="project" value="MGI"/>
</dbReference>
<dbReference type="GO" id="GO:0005581">
    <property type="term" value="C:collagen trimer"/>
    <property type="evidence" value="ECO:0007669"/>
    <property type="project" value="UniProtKB-KW"/>
</dbReference>
<dbReference type="GO" id="GO:0062023">
    <property type="term" value="C:collagen-containing extracellular matrix"/>
    <property type="evidence" value="ECO:0007005"/>
    <property type="project" value="BHF-UCL"/>
</dbReference>
<dbReference type="GO" id="GO:0005576">
    <property type="term" value="C:extracellular region"/>
    <property type="evidence" value="ECO:0000304"/>
    <property type="project" value="Reactome"/>
</dbReference>
<dbReference type="GO" id="GO:0042802">
    <property type="term" value="F:identical protein binding"/>
    <property type="evidence" value="ECO:0000353"/>
    <property type="project" value="IntAct"/>
</dbReference>
<dbReference type="GO" id="GO:0004867">
    <property type="term" value="F:serine-type endopeptidase inhibitor activity"/>
    <property type="evidence" value="ECO:0007669"/>
    <property type="project" value="UniProtKB-KW"/>
</dbReference>
<dbReference type="GO" id="GO:0007155">
    <property type="term" value="P:cell adhesion"/>
    <property type="evidence" value="ECO:0007669"/>
    <property type="project" value="UniProtKB-KW"/>
</dbReference>
<dbReference type="CDD" id="cd00063">
    <property type="entry name" value="FN3"/>
    <property type="match status" value="9"/>
</dbReference>
<dbReference type="CDD" id="cd22627">
    <property type="entry name" value="Kunitz_collagen_alpha1_VII"/>
    <property type="match status" value="1"/>
</dbReference>
<dbReference type="CDD" id="cd01482">
    <property type="entry name" value="vWA_collagen_alphaI-XII-like"/>
    <property type="match status" value="1"/>
</dbReference>
<dbReference type="CDD" id="cd01450">
    <property type="entry name" value="vWFA_subfamily_ECM"/>
    <property type="match status" value="1"/>
</dbReference>
<dbReference type="FunFam" id="3.40.50.410:FF:000072">
    <property type="entry name" value="collagen alpha-1(VII) chain"/>
    <property type="match status" value="1"/>
</dbReference>
<dbReference type="FunFam" id="4.10.410.10:FF:000019">
    <property type="entry name" value="collagen alpha-1(VII) chain"/>
    <property type="match status" value="1"/>
</dbReference>
<dbReference type="FunFam" id="2.60.40.10:FF:000307">
    <property type="entry name" value="collagen alpha-1(VII) chain isoform X1"/>
    <property type="match status" value="5"/>
</dbReference>
<dbReference type="FunFam" id="2.60.40.10:FF:001333">
    <property type="entry name" value="collagen alpha-1(VII) chain isoform X2"/>
    <property type="match status" value="1"/>
</dbReference>
<dbReference type="FunFam" id="2.60.40.10:FF:001646">
    <property type="entry name" value="Collagen, type VII, alpha 1"/>
    <property type="match status" value="1"/>
</dbReference>
<dbReference type="FunFam" id="3.40.50.410:FF:000001">
    <property type="entry name" value="Collagen, type XII, alpha 1"/>
    <property type="match status" value="1"/>
</dbReference>
<dbReference type="FunFam" id="2.60.40.10:FF:001175">
    <property type="entry name" value="Putative collagen alpha-1vii chain"/>
    <property type="match status" value="1"/>
</dbReference>
<dbReference type="Gene3D" id="1.20.5.320">
    <property type="entry name" value="6-Phosphogluconate Dehydrogenase, domain 3"/>
    <property type="match status" value="1"/>
</dbReference>
<dbReference type="Gene3D" id="2.60.40.10">
    <property type="entry name" value="Immunoglobulins"/>
    <property type="match status" value="9"/>
</dbReference>
<dbReference type="Gene3D" id="4.10.410.10">
    <property type="entry name" value="Pancreatic trypsin inhibitor Kunitz domain"/>
    <property type="match status" value="1"/>
</dbReference>
<dbReference type="Gene3D" id="3.40.50.410">
    <property type="entry name" value="von Willebrand factor, type A domain"/>
    <property type="match status" value="2"/>
</dbReference>
<dbReference type="InterPro" id="IPR008160">
    <property type="entry name" value="Collagen"/>
</dbReference>
<dbReference type="InterPro" id="IPR050149">
    <property type="entry name" value="Collagen_superfamily"/>
</dbReference>
<dbReference type="InterPro" id="IPR003961">
    <property type="entry name" value="FN3_dom"/>
</dbReference>
<dbReference type="InterPro" id="IPR036116">
    <property type="entry name" value="FN3_sf"/>
</dbReference>
<dbReference type="InterPro" id="IPR013783">
    <property type="entry name" value="Ig-like_fold"/>
</dbReference>
<dbReference type="InterPro" id="IPR002223">
    <property type="entry name" value="Kunitz_BPTI"/>
</dbReference>
<dbReference type="InterPro" id="IPR036880">
    <property type="entry name" value="Kunitz_BPTI_sf"/>
</dbReference>
<dbReference type="InterPro" id="IPR020901">
    <property type="entry name" value="Prtase_inh_Kunz-CS"/>
</dbReference>
<dbReference type="InterPro" id="IPR002035">
    <property type="entry name" value="VWF_A"/>
</dbReference>
<dbReference type="InterPro" id="IPR036465">
    <property type="entry name" value="vWFA_dom_sf"/>
</dbReference>
<dbReference type="PANTHER" id="PTHR24023">
    <property type="entry name" value="COLLAGEN ALPHA"/>
    <property type="match status" value="1"/>
</dbReference>
<dbReference type="PANTHER" id="PTHR24023:SF1082">
    <property type="entry name" value="COLLAGEN TRIPLE HELIX REPEAT"/>
    <property type="match status" value="1"/>
</dbReference>
<dbReference type="Pfam" id="PF01391">
    <property type="entry name" value="Collagen"/>
    <property type="match status" value="19"/>
</dbReference>
<dbReference type="Pfam" id="PF00041">
    <property type="entry name" value="fn3"/>
    <property type="match status" value="7"/>
</dbReference>
<dbReference type="Pfam" id="PF00014">
    <property type="entry name" value="Kunitz_BPTI"/>
    <property type="match status" value="1"/>
</dbReference>
<dbReference type="Pfam" id="PF00092">
    <property type="entry name" value="VWA"/>
    <property type="match status" value="2"/>
</dbReference>
<dbReference type="PRINTS" id="PR00759">
    <property type="entry name" value="BASICPTASE"/>
</dbReference>
<dbReference type="PRINTS" id="PR00453">
    <property type="entry name" value="VWFADOMAIN"/>
</dbReference>
<dbReference type="SMART" id="SM00060">
    <property type="entry name" value="FN3"/>
    <property type="match status" value="9"/>
</dbReference>
<dbReference type="SMART" id="SM00327">
    <property type="entry name" value="VWA"/>
    <property type="match status" value="1"/>
</dbReference>
<dbReference type="SUPFAM" id="SSF57362">
    <property type="entry name" value="BPTI-like"/>
    <property type="match status" value="1"/>
</dbReference>
<dbReference type="SUPFAM" id="SSF49265">
    <property type="entry name" value="Fibronectin type III"/>
    <property type="match status" value="5"/>
</dbReference>
<dbReference type="SUPFAM" id="SSF53300">
    <property type="entry name" value="vWA-like"/>
    <property type="match status" value="2"/>
</dbReference>
<dbReference type="PROSITE" id="PS00280">
    <property type="entry name" value="BPTI_KUNITZ_1"/>
    <property type="match status" value="1"/>
</dbReference>
<dbReference type="PROSITE" id="PS50279">
    <property type="entry name" value="BPTI_KUNITZ_2"/>
    <property type="match status" value="1"/>
</dbReference>
<dbReference type="PROSITE" id="PS50853">
    <property type="entry name" value="FN3"/>
    <property type="match status" value="9"/>
</dbReference>
<dbReference type="PROSITE" id="PS50234">
    <property type="entry name" value="VWFA"/>
    <property type="match status" value="2"/>
</dbReference>
<sequence length="2944" mass="295232">MRLRLLVAALCAAEILMGAPEVWAQPRDRVTCTRLYAADIVFLLDGSSSIGRSNFREVRGFLEGLVLPFSGAASAQGVRFATVQYSDDPQTEFGLDTLGSGSDTIRAIRELSYKGGNTRTGAALHHVSDRVFLPRLTRPGVPKVCILITDGKSQDLVDTAAQKLKGQGVKLFAVGIKNADPEELKRVASQPTSDFFFFVNDFSILRTLLPLISRRVCTTAGGVPVTLPSDDTPSGPRDLVLSEPSSQSLRVQWTAASGPVTGYKVQYTPLTGLGQPLPSERQEVNIPAGETSTRLQGLRPLTDYQVTVVALYANSIGEAVSGTARTTAKEGLELSLQNITSHSLLVAWRRVPGANGYRVTWRDLSGGPTQQQDLSPGQGSVFLDHLEPGTDYEVTVSALFGHSVGPAASLTARTASSVEQTLHPIILSPTSILLSWNLVPEARGYRLEWRRESGLETPQKVELPPDVTRHQLDGLQPGTEYRLTLYTLLEGREVATPATVVPTGLEQLVSPVMNLQAIELPGQRVRVSWNPVPGATEYRFTVRTTQGVERTLLLPGSQTTFDLDDVRAGLSYTVRVSARVGAQEGDASILTIHRDPEAPLVVPGLRVVASDATRIRVAWGLVPGASGFRISWRTGSGPESSRTLTPDSTVTDILGLQPSTSYQVAVSALRGREEGPPVVIVARTDPLGPVRRVHLTQAGSSSVSITWTGVPGATGYRVSWHSGHGPEKSLLVSGDATVAEIDGLEPDTEYIVRVRTHVAGVDGAPASVVVRTAPEPVGSVSKLQILNASSDVLRVTWVGVPGATSYKLAWGRSEGGPMKHRILPGNKESAEIRDLEGGVSYSVRVTALVGDREGAPVSIVITTPPATPALLETLQVVQSGEHSLRLRWEPVPGAPGFRLHWQPEGGQEQSLTLGPESNSYNLVGLEPATKYQVWLTVLGQTGEGPPRKVTAYTEPSHIPSTELRVVDTSIDSVTLTWTPVSGASSYILSWRPLRGTGQEVPRAPQTLPGTSSSHRVTGLEPGISYVFSLTPIQSGVRGSEISVTQTPACSHGPVDVVFLLHATRDNAHNAEAVRRVLERLVSALGPLGPQAAQVGLLTYSHRPSPLFPLNSSHDLGIILRKIRDIPYVDPSGNNLGTAVTTAHRYLLASNAPGRRQQVPGVMVLLVDEPLRGDILSPIREAQTSGLKVMALSLVGADPEQLRRLAPGTDPIQNFFAVDNGPGLDRAVSDLAVALCQAAVTIEPQTGPCAVHCPKGQKGEPGVTGLQGQAGPPGPPGLPGRTGAPGPQGPPGSTQAKGERGFPGPEGPPGSPGLPGVPGSPGIKGSTGRPGPRGEQGERGPQGPKGEPGEPGQITGGGGPGFPGKKGDPGPSGPPGSRGPVGDPGPRGPPGLPGISVKGDKGDRGERGPPGPGIGASEQGDPGLPGLPGSPGPQGPAGRPGEKGEKGDCEDGGPGLPGQPGPPGEPGLRGAPGMTGPKGDRGLTGTPGEPGVKGERGHPGPVGPQGLPGAAGHPGVEGPEGPPGPTGRRGEKGEPGRPGDPAVGPGGAGAKGEKGEAGLPGPRGASGSKGEQGAPGLALPGDPGPKGDPGDRGPIGLTGRAGPTGDSGPPGEKGEPGRPGSPGPVGPRGRDGEAGEKGDEGIPGEPGLPGKAGERGLRGAPGPRGPVGEKGDQGDPGEDGRNGSPGSSGPKGDRGEPGPPGPPGRLVDAGIESRDKGEPGQEGPRGPKGDPGPPGVSGERGIDGLRGPPGPQGDPGVRGPAGDKGDRGPPGLDGRSGLDGKPGAPGPPGLHGASGKAGDPGRDGLPGLRGEHGPPGPPGPPGVPGKAGDDGKPGLNGKNGDPGDPGEDGRKGEKGDSGAPGREGPDGPKGERGAPGNPGLQGPPGLPGQVGPPGQGFPGVPGITGPKGDRGETGSKGEQGLPGERGLRGEPGSLPNAERLLETAGIKVSALREIVDTWDESSGSFLPVPERRPGPKGDPGDRGPPGKEGLIGFPGERGLKGERGDPGPQGPPGLALGERGPPGPPGLAGEPGKPGIPGLPGRAGGSGEAGRPGERGERGEKGERGDQGRDGLPGLPGPPGPPGPKVAIEEPGPGLAREQGPPGLKGAKGEPGSDGDPGPKGDRGVPGIKGDVGEPGKRGHDGNPGLPGERGVAGPEGKPGLQGPRGTPGPVGSHGDPGPPGAPGLAGPAGPQGPSGLKGEPGETGPPGRGLPGPVGAVGLPGPPGPSGLVGPQGSPGLPGQVGETGKPGPPGRDGSSGKDGDRGSPGVPGSPGLPGPVGPKGEPGPVGAPGQVVVGPPGAKGEKGAPGDLAGALLGEPGAKGDRGLPGPRGEKGEAGRAGGPGDPGEDGQKGAPGLKGLKGEPGIGVQGPPGPSGPPGMKGDLGPPGAPGAPGVVGFPGQTGPRGETGQPGPVGERGLAGPPGREGAPGPLGPPGPPGSAGAPGASGLKGDKGDPGAGLPGPRGERGEPGVRGEDGHPGQEGPRGLVGPPGSRGEQGEKGAAGAAGLKGDKGDSAVIEGPPGPRGAKGDMGERGPRGIDGDKGPRGESGNPGDKGSKGEPGDKGSAGSIGVRGLTGPKGEPGAAGIPGEPGAPGKDGIPGFRGDKGDIGFMGPRGLKGEKGIKGTCGRDGERGDKGEAGFPGRPGLAGKKGDMGEPGLPGQSGAPGKEGLIGPKGDRGFDGQSGPKGDQGEKGERGPPGVGGFPGPRGNDGSSGPPGPPGGVGPKGPEGLQGQKGERGPPGESVVGAPGAPGTPGERGEQGRPGPAGPRGEKGEAALTEDDIRDFVRQEMSQHCACQGQFIASGSRPLPGYAADTAGSQLHHVPVLRVSHVEEEGQVPPEDDDDFSEYSVYSVEDYQEPEVPWDGEAEIKGWDQRGSDLCSLPLDEGSCTAYTLRWYHRAVPGGTACHPFVYGGCGGNANRFGTREACERRCPPQGVHSQKTGAA</sequence>
<protein>
    <recommendedName>
        <fullName>Collagen alpha-1(VII) chain</fullName>
    </recommendedName>
    <alternativeName>
        <fullName>Long-chain collagen</fullName>
        <shortName>LC collagen</shortName>
    </alternativeName>
</protein>
<name>CO7A1_MOUSE</name>
<proteinExistence type="evidence at protein level"/>
<reference evidence="12" key="1">
    <citation type="journal article" date="1996" name="J. Invest. Dermatol.">
        <title>Cloning of mouse type VII collagen reveals evolutionary conservation of functional protein domains and genomic organization.</title>
        <authorList>
            <person name="Kivirikko S."/>
            <person name="Li K."/>
            <person name="Christiano A.M."/>
            <person name="Uitto J."/>
        </authorList>
    </citation>
    <scope>NUCLEOTIDE SEQUENCE [MRNA]</scope>
</reference>
<reference key="2">
    <citation type="journal article" date="2009" name="PLoS Biol.">
        <title>Lineage-specific biology revealed by a finished genome assembly of the mouse.</title>
        <authorList>
            <person name="Church D.M."/>
            <person name="Goodstadt L."/>
            <person name="Hillier L.W."/>
            <person name="Zody M.C."/>
            <person name="Goldstein S."/>
            <person name="She X."/>
            <person name="Bult C.J."/>
            <person name="Agarwala R."/>
            <person name="Cherry J.L."/>
            <person name="DiCuccio M."/>
            <person name="Hlavina W."/>
            <person name="Kapustin Y."/>
            <person name="Meric P."/>
            <person name="Maglott D."/>
            <person name="Birtle Z."/>
            <person name="Marques A.C."/>
            <person name="Graves T."/>
            <person name="Zhou S."/>
            <person name="Teague B."/>
            <person name="Potamousis K."/>
            <person name="Churas C."/>
            <person name="Place M."/>
            <person name="Herschleb J."/>
            <person name="Runnheim R."/>
            <person name="Forrest D."/>
            <person name="Amos-Landgraf J."/>
            <person name="Schwartz D.C."/>
            <person name="Cheng Z."/>
            <person name="Lindblad-Toh K."/>
            <person name="Eichler E.E."/>
            <person name="Ponting C.P."/>
        </authorList>
    </citation>
    <scope>NUCLEOTIDE SEQUENCE [LARGE SCALE GENOMIC DNA]</scope>
</reference>
<reference evidence="10 11" key="3">
    <citation type="journal article" date="1993" name="Genomics">
        <title>cDNA cloning and chromosomal mapping of the mouse type VII collagen gene (Col7a1): evidence for rapid evolutionary divergence of the gene.</title>
        <authorList>
            <person name="Li K."/>
            <person name="Christiano A.M."/>
            <person name="Copeland N.G."/>
            <person name="Gilbert D.J."/>
            <person name="Chu M.-L."/>
            <person name="Jenkins N.A."/>
            <person name="Uitto J."/>
        </authorList>
    </citation>
    <scope>NUCLEOTIDE SEQUENCE [MRNA] OF 1139-2058</scope>
</reference>
<reference evidence="10" key="4">
    <citation type="journal article" date="1999" name="J. Cell Sci.">
        <title>Targeted inactivation of the type VII collagen gene (Col7a1) in mice results in severe blistering phenotype: a model for recessive dystrophic epidermolysis bullosa.</title>
        <authorList>
            <person name="Heinonen S."/>
            <person name="Mannikko M."/>
            <person name="Klement J.F."/>
            <person name="Whitaker-Menezes D."/>
            <person name="Murphy G.F."/>
            <person name="Uitto J."/>
        </authorList>
    </citation>
    <scope>DISRUPTION PHENOTYPE</scope>
</reference>
<reference evidence="10" key="5">
    <citation type="journal article" date="2003" name="J. Invest. Dermatol.">
        <title>Transcriptional control of the mouse Col7a1 gene in keratinocytes: basal and transforming growth factor-beta regulated expression.</title>
        <authorList>
            <person name="Naso M."/>
            <person name="Uitto J."/>
            <person name="Klement J.F."/>
        </authorList>
    </citation>
    <scope>INDUCTION</scope>
</reference>
<reference key="6">
    <citation type="journal article" date="2010" name="Cell">
        <title>A tissue-specific atlas of mouse protein phosphorylation and expression.</title>
        <authorList>
            <person name="Huttlin E.L."/>
            <person name="Jedrychowski M.P."/>
            <person name="Elias J.E."/>
            <person name="Goswami T."/>
            <person name="Rad R."/>
            <person name="Beausoleil S.A."/>
            <person name="Villen J."/>
            <person name="Haas W."/>
            <person name="Sowa M.E."/>
            <person name="Gygi S.P."/>
        </authorList>
    </citation>
    <scope>IDENTIFICATION BY MASS SPECTROMETRY [LARGE SCALE ANALYSIS]</scope>
    <source>
        <tissue>Pancreas</tissue>
    </source>
</reference>
<accession>Q63870</accession>
<accession>Q78EC6</accession>